<protein>
    <recommendedName>
        <fullName evidence="1">Pyridoxine/pyridoxamine 5'-phosphate oxidase</fullName>
        <ecNumber evidence="1">1.4.3.5</ecNumber>
    </recommendedName>
    <alternativeName>
        <fullName evidence="1">PNP/PMP oxidase</fullName>
        <shortName evidence="1">PNPOx</shortName>
    </alternativeName>
    <alternativeName>
        <fullName evidence="1">Pyridoxal 5'-phosphate synthase</fullName>
    </alternativeName>
</protein>
<organism>
    <name type="scientific">Brucella canis (strain ATCC 23365 / NCTC 10854 / RM-666)</name>
    <dbReference type="NCBI Taxonomy" id="483179"/>
    <lineage>
        <taxon>Bacteria</taxon>
        <taxon>Pseudomonadati</taxon>
        <taxon>Pseudomonadota</taxon>
        <taxon>Alphaproteobacteria</taxon>
        <taxon>Hyphomicrobiales</taxon>
        <taxon>Brucellaceae</taxon>
        <taxon>Brucella/Ochrobactrum group</taxon>
        <taxon>Brucella</taxon>
    </lineage>
</organism>
<sequence length="203" mass="23281">MTNSSDDFTQSAEPFKLFAEWLADAAKSEPNDPNAVALATVDPDGLPNVRMVLLKDFDETGFVFYTNYESKKGQEILSAEKAAMCFHWKSLRRQVRVRGPVEKVSDAEADAYYASRPRGSRIGAWASKQSRPLESRFALEKAVAEYTAKYAIGDIPRPPYWSGFRIRPVSIEFWHDRPFRLHDRVLFTRPTPEGDWNKDRLYP</sequence>
<name>PDXH_BRUC2</name>
<keyword id="KW-0285">Flavoprotein</keyword>
<keyword id="KW-0288">FMN</keyword>
<keyword id="KW-0560">Oxidoreductase</keyword>
<keyword id="KW-0664">Pyridoxine biosynthesis</keyword>
<keyword id="KW-1185">Reference proteome</keyword>
<accession>A9M8J1</accession>
<evidence type="ECO:0000255" key="1">
    <source>
        <dbReference type="HAMAP-Rule" id="MF_01629"/>
    </source>
</evidence>
<proteinExistence type="inferred from homology"/>
<feature type="chain" id="PRO_0000335781" description="Pyridoxine/pyridoxamine 5'-phosphate oxidase">
    <location>
        <begin position="1"/>
        <end position="203"/>
    </location>
</feature>
<feature type="binding site" evidence="1">
    <location>
        <begin position="50"/>
        <end position="55"/>
    </location>
    <ligand>
        <name>FMN</name>
        <dbReference type="ChEBI" id="CHEBI:58210"/>
    </ligand>
</feature>
<feature type="binding site" evidence="1">
    <location>
        <position position="55"/>
    </location>
    <ligand>
        <name>substrate</name>
    </ligand>
</feature>
<feature type="binding site" evidence="1">
    <location>
        <begin position="65"/>
        <end position="66"/>
    </location>
    <ligand>
        <name>FMN</name>
        <dbReference type="ChEBI" id="CHEBI:58210"/>
    </ligand>
</feature>
<feature type="binding site" evidence="1">
    <location>
        <position position="71"/>
    </location>
    <ligand>
        <name>FMN</name>
        <dbReference type="ChEBI" id="CHEBI:58210"/>
    </ligand>
</feature>
<feature type="binding site" evidence="1">
    <location>
        <position position="72"/>
    </location>
    <ligand>
        <name>FMN</name>
        <dbReference type="ChEBI" id="CHEBI:58210"/>
    </ligand>
</feature>
<feature type="binding site" evidence="1">
    <location>
        <position position="94"/>
    </location>
    <ligand>
        <name>FMN</name>
        <dbReference type="ChEBI" id="CHEBI:58210"/>
    </ligand>
</feature>
<feature type="binding site" evidence="1">
    <location>
        <position position="112"/>
    </location>
    <ligand>
        <name>substrate</name>
    </ligand>
</feature>
<feature type="binding site" evidence="1">
    <location>
        <position position="116"/>
    </location>
    <ligand>
        <name>substrate</name>
    </ligand>
</feature>
<feature type="binding site" evidence="1">
    <location>
        <position position="120"/>
    </location>
    <ligand>
        <name>substrate</name>
    </ligand>
</feature>
<feature type="binding site" evidence="1">
    <location>
        <begin position="129"/>
        <end position="130"/>
    </location>
    <ligand>
        <name>FMN</name>
        <dbReference type="ChEBI" id="CHEBI:58210"/>
    </ligand>
</feature>
<feature type="binding site" evidence="1">
    <location>
        <position position="174"/>
    </location>
    <ligand>
        <name>FMN</name>
        <dbReference type="ChEBI" id="CHEBI:58210"/>
    </ligand>
</feature>
<feature type="binding site" evidence="1">
    <location>
        <begin position="180"/>
        <end position="182"/>
    </location>
    <ligand>
        <name>substrate</name>
    </ligand>
</feature>
<feature type="binding site" evidence="1">
    <location>
        <position position="184"/>
    </location>
    <ligand>
        <name>FMN</name>
        <dbReference type="ChEBI" id="CHEBI:58210"/>
    </ligand>
</feature>
<comment type="function">
    <text evidence="1">Catalyzes the oxidation of either pyridoxine 5'-phosphate (PNP) or pyridoxamine 5'-phosphate (PMP) into pyridoxal 5'-phosphate (PLP).</text>
</comment>
<comment type="catalytic activity">
    <reaction evidence="1">
        <text>pyridoxamine 5'-phosphate + O2 + H2O = pyridoxal 5'-phosphate + H2O2 + NH4(+)</text>
        <dbReference type="Rhea" id="RHEA:15817"/>
        <dbReference type="ChEBI" id="CHEBI:15377"/>
        <dbReference type="ChEBI" id="CHEBI:15379"/>
        <dbReference type="ChEBI" id="CHEBI:16240"/>
        <dbReference type="ChEBI" id="CHEBI:28938"/>
        <dbReference type="ChEBI" id="CHEBI:58451"/>
        <dbReference type="ChEBI" id="CHEBI:597326"/>
        <dbReference type="EC" id="1.4.3.5"/>
    </reaction>
</comment>
<comment type="catalytic activity">
    <reaction evidence="1">
        <text>pyridoxine 5'-phosphate + O2 = pyridoxal 5'-phosphate + H2O2</text>
        <dbReference type="Rhea" id="RHEA:15149"/>
        <dbReference type="ChEBI" id="CHEBI:15379"/>
        <dbReference type="ChEBI" id="CHEBI:16240"/>
        <dbReference type="ChEBI" id="CHEBI:58589"/>
        <dbReference type="ChEBI" id="CHEBI:597326"/>
        <dbReference type="EC" id="1.4.3.5"/>
    </reaction>
</comment>
<comment type="cofactor">
    <cofactor evidence="1">
        <name>FMN</name>
        <dbReference type="ChEBI" id="CHEBI:58210"/>
    </cofactor>
    <text evidence="1">Binds 1 FMN per subunit.</text>
</comment>
<comment type="pathway">
    <text evidence="1">Cofactor metabolism; pyridoxal 5'-phosphate salvage; pyridoxal 5'-phosphate from pyridoxamine 5'-phosphate: step 1/1.</text>
</comment>
<comment type="pathway">
    <text evidence="1">Cofactor metabolism; pyridoxal 5'-phosphate salvage; pyridoxal 5'-phosphate from pyridoxine 5'-phosphate: step 1/1.</text>
</comment>
<comment type="subunit">
    <text evidence="1">Homodimer.</text>
</comment>
<comment type="similarity">
    <text evidence="1">Belongs to the pyridoxamine 5'-phosphate oxidase family.</text>
</comment>
<reference key="1">
    <citation type="submission" date="2007-10" db="EMBL/GenBank/DDBJ databases">
        <title>Brucella canis ATCC 23365 whole genome shotgun sequencing project.</title>
        <authorList>
            <person name="Setubal J.C."/>
            <person name="Bowns C."/>
            <person name="Boyle S."/>
            <person name="Crasta O.R."/>
            <person name="Czar M.J."/>
            <person name="Dharmanolla C."/>
            <person name="Gillespie J.J."/>
            <person name="Kenyon R.W."/>
            <person name="Lu J."/>
            <person name="Mane S."/>
            <person name="Mohapatra S."/>
            <person name="Nagrani S."/>
            <person name="Purkayastha A."/>
            <person name="Rajasimha H.K."/>
            <person name="Shallom J.M."/>
            <person name="Shallom S."/>
            <person name="Shukla M."/>
            <person name="Snyder E.E."/>
            <person name="Sobral B.W."/>
            <person name="Wattam A.R."/>
            <person name="Will R."/>
            <person name="Williams K."/>
            <person name="Yoo H."/>
            <person name="Bruce D."/>
            <person name="Detter C."/>
            <person name="Munk C."/>
            <person name="Brettin T.S."/>
        </authorList>
    </citation>
    <scope>NUCLEOTIDE SEQUENCE [LARGE SCALE GENOMIC DNA]</scope>
    <source>
        <strain>ATCC 23365 / NCTC 10854 / RM-666</strain>
    </source>
</reference>
<dbReference type="EC" id="1.4.3.5" evidence="1"/>
<dbReference type="EMBL" id="CP000872">
    <property type="protein sequence ID" value="ABX61507.1"/>
    <property type="molecule type" value="Genomic_DNA"/>
</dbReference>
<dbReference type="RefSeq" id="WP_002971565.1">
    <property type="nucleotide sequence ID" value="NC_010103.1"/>
</dbReference>
<dbReference type="SMR" id="A9M8J1"/>
<dbReference type="GeneID" id="97534209"/>
<dbReference type="KEGG" id="bcs:BCAN_A0421"/>
<dbReference type="HOGENOM" id="CLU_032263_2_3_5"/>
<dbReference type="PhylomeDB" id="A9M8J1"/>
<dbReference type="UniPathway" id="UPA01068">
    <property type="reaction ID" value="UER00304"/>
</dbReference>
<dbReference type="UniPathway" id="UPA01068">
    <property type="reaction ID" value="UER00305"/>
</dbReference>
<dbReference type="Proteomes" id="UP000001385">
    <property type="component" value="Chromosome I"/>
</dbReference>
<dbReference type="GO" id="GO:0010181">
    <property type="term" value="F:FMN binding"/>
    <property type="evidence" value="ECO:0007669"/>
    <property type="project" value="UniProtKB-UniRule"/>
</dbReference>
<dbReference type="GO" id="GO:0004733">
    <property type="term" value="F:pyridoxamine phosphate oxidase activity"/>
    <property type="evidence" value="ECO:0007669"/>
    <property type="project" value="UniProtKB-UniRule"/>
</dbReference>
<dbReference type="GO" id="GO:0008615">
    <property type="term" value="P:pyridoxine biosynthetic process"/>
    <property type="evidence" value="ECO:0007669"/>
    <property type="project" value="UniProtKB-KW"/>
</dbReference>
<dbReference type="Gene3D" id="2.30.110.10">
    <property type="entry name" value="Electron Transport, Fmn-binding Protein, Chain A"/>
    <property type="match status" value="1"/>
</dbReference>
<dbReference type="HAMAP" id="MF_01629">
    <property type="entry name" value="PdxH"/>
    <property type="match status" value="1"/>
</dbReference>
<dbReference type="InterPro" id="IPR000659">
    <property type="entry name" value="Pyridox_Oxase"/>
</dbReference>
<dbReference type="InterPro" id="IPR019740">
    <property type="entry name" value="Pyridox_Oxase_CS"/>
</dbReference>
<dbReference type="InterPro" id="IPR011576">
    <property type="entry name" value="Pyridox_Oxase_N"/>
</dbReference>
<dbReference type="InterPro" id="IPR019576">
    <property type="entry name" value="Pyridoxamine_oxidase_dimer_C"/>
</dbReference>
<dbReference type="InterPro" id="IPR012349">
    <property type="entry name" value="Split_barrel_FMN-bd"/>
</dbReference>
<dbReference type="NCBIfam" id="TIGR00558">
    <property type="entry name" value="pdxH"/>
    <property type="match status" value="1"/>
</dbReference>
<dbReference type="NCBIfam" id="NF004231">
    <property type="entry name" value="PRK05679.1"/>
    <property type="match status" value="1"/>
</dbReference>
<dbReference type="PANTHER" id="PTHR10851:SF0">
    <property type="entry name" value="PYRIDOXINE-5'-PHOSPHATE OXIDASE"/>
    <property type="match status" value="1"/>
</dbReference>
<dbReference type="PANTHER" id="PTHR10851">
    <property type="entry name" value="PYRIDOXINE-5-PHOSPHATE OXIDASE"/>
    <property type="match status" value="1"/>
</dbReference>
<dbReference type="Pfam" id="PF10590">
    <property type="entry name" value="PNP_phzG_C"/>
    <property type="match status" value="1"/>
</dbReference>
<dbReference type="Pfam" id="PF01243">
    <property type="entry name" value="PNPOx_N"/>
    <property type="match status" value="1"/>
</dbReference>
<dbReference type="PIRSF" id="PIRSF000190">
    <property type="entry name" value="Pyd_amn-ph_oxd"/>
    <property type="match status" value="1"/>
</dbReference>
<dbReference type="SUPFAM" id="SSF50475">
    <property type="entry name" value="FMN-binding split barrel"/>
    <property type="match status" value="1"/>
</dbReference>
<dbReference type="PROSITE" id="PS01064">
    <property type="entry name" value="PYRIDOX_OXIDASE"/>
    <property type="match status" value="1"/>
</dbReference>
<gene>
    <name evidence="1" type="primary">pdxH</name>
    <name type="ordered locus">BCAN_A0421</name>
</gene>